<protein>
    <recommendedName>
        <fullName evidence="1">Ribosomal RNA large subunit methyltransferase I</fullName>
        <ecNumber evidence="1">2.1.1.191</ecNumber>
    </recommendedName>
    <alternativeName>
        <fullName evidence="1">23S rRNA m5C1962 methyltransferase</fullName>
    </alternativeName>
    <alternativeName>
        <fullName evidence="1">rRNA (cytosine-C(5)-)-methyltransferase RlmI</fullName>
    </alternativeName>
</protein>
<keyword id="KW-0963">Cytoplasm</keyword>
<keyword id="KW-0489">Methyltransferase</keyword>
<keyword id="KW-0694">RNA-binding</keyword>
<keyword id="KW-0698">rRNA processing</keyword>
<keyword id="KW-0949">S-adenosyl-L-methionine</keyword>
<keyword id="KW-0808">Transferase</keyword>
<feature type="chain" id="PRO_0000366229" description="Ribosomal RNA large subunit methyltransferase I">
    <location>
        <begin position="1"/>
        <end position="396"/>
    </location>
</feature>
<feature type="domain" description="PUA" evidence="1">
    <location>
        <begin position="2"/>
        <end position="81"/>
    </location>
</feature>
<evidence type="ECO:0000255" key="1">
    <source>
        <dbReference type="HAMAP-Rule" id="MF_01857"/>
    </source>
</evidence>
<comment type="function">
    <text evidence="1">Specifically methylates the cytosine at position 1962 (m5C1962) of 23S rRNA.</text>
</comment>
<comment type="catalytic activity">
    <reaction evidence="1">
        <text>cytidine(1962) in 23S rRNA + S-adenosyl-L-methionine = 5-methylcytidine(1962) in 23S rRNA + S-adenosyl-L-homocysteine + H(+)</text>
        <dbReference type="Rhea" id="RHEA:42912"/>
        <dbReference type="Rhea" id="RHEA-COMP:10382"/>
        <dbReference type="Rhea" id="RHEA-COMP:10386"/>
        <dbReference type="ChEBI" id="CHEBI:15378"/>
        <dbReference type="ChEBI" id="CHEBI:57856"/>
        <dbReference type="ChEBI" id="CHEBI:59789"/>
        <dbReference type="ChEBI" id="CHEBI:74483"/>
        <dbReference type="ChEBI" id="CHEBI:82748"/>
        <dbReference type="EC" id="2.1.1.191"/>
    </reaction>
</comment>
<comment type="subcellular location">
    <subcellularLocation>
        <location evidence="1">Cytoplasm</location>
    </subcellularLocation>
</comment>
<comment type="similarity">
    <text evidence="1">Belongs to the methyltransferase superfamily. RlmI family.</text>
</comment>
<name>RLMI_ECO5E</name>
<reference key="1">
    <citation type="journal article" date="2011" name="Proc. Natl. Acad. Sci. U.S.A.">
        <title>Genomic anatomy of Escherichia coli O157:H7 outbreaks.</title>
        <authorList>
            <person name="Eppinger M."/>
            <person name="Mammel M.K."/>
            <person name="Leclerc J.E."/>
            <person name="Ravel J."/>
            <person name="Cebula T.A."/>
        </authorList>
    </citation>
    <scope>NUCLEOTIDE SEQUENCE [LARGE SCALE GENOMIC DNA]</scope>
    <source>
        <strain>EC4115 / EHEC</strain>
    </source>
</reference>
<dbReference type="EC" id="2.1.1.191" evidence="1"/>
<dbReference type="EMBL" id="CP001164">
    <property type="protein sequence ID" value="ACI39814.1"/>
    <property type="molecule type" value="Genomic_DNA"/>
</dbReference>
<dbReference type="RefSeq" id="WP_000116288.1">
    <property type="nucleotide sequence ID" value="NC_011353.1"/>
</dbReference>
<dbReference type="SMR" id="B5YT98"/>
<dbReference type="KEGG" id="ecf:ECH74115_1132"/>
<dbReference type="HOGENOM" id="CLU_014042_0_0_6"/>
<dbReference type="GO" id="GO:0005737">
    <property type="term" value="C:cytoplasm"/>
    <property type="evidence" value="ECO:0007669"/>
    <property type="project" value="UniProtKB-SubCell"/>
</dbReference>
<dbReference type="GO" id="GO:0003723">
    <property type="term" value="F:RNA binding"/>
    <property type="evidence" value="ECO:0007669"/>
    <property type="project" value="UniProtKB-KW"/>
</dbReference>
<dbReference type="GO" id="GO:0016434">
    <property type="term" value="F:rRNA (cytosine) methyltransferase activity"/>
    <property type="evidence" value="ECO:0007669"/>
    <property type="project" value="UniProtKB-UniRule"/>
</dbReference>
<dbReference type="CDD" id="cd02440">
    <property type="entry name" value="AdoMet_MTases"/>
    <property type="match status" value="1"/>
</dbReference>
<dbReference type="CDD" id="cd21153">
    <property type="entry name" value="PUA_RlmI"/>
    <property type="match status" value="1"/>
</dbReference>
<dbReference type="CDD" id="cd11572">
    <property type="entry name" value="RlmI_M_like"/>
    <property type="match status" value="1"/>
</dbReference>
<dbReference type="FunFam" id="2.30.130.10:FF:000005">
    <property type="entry name" value="Ribosomal RNA large subunit methyltransferase I"/>
    <property type="match status" value="1"/>
</dbReference>
<dbReference type="FunFam" id="3.30.750.80:FF:000002">
    <property type="entry name" value="Ribosomal RNA large subunit methyltransferase I"/>
    <property type="match status" value="1"/>
</dbReference>
<dbReference type="FunFam" id="3.40.50.150:FF:000044">
    <property type="entry name" value="Ribosomal RNA large subunit methyltransferase I"/>
    <property type="match status" value="1"/>
</dbReference>
<dbReference type="Gene3D" id="2.30.130.10">
    <property type="entry name" value="PUA domain"/>
    <property type="match status" value="1"/>
</dbReference>
<dbReference type="Gene3D" id="3.30.750.80">
    <property type="entry name" value="RNA methyltransferase domain (HRMD) like"/>
    <property type="match status" value="1"/>
</dbReference>
<dbReference type="Gene3D" id="3.40.50.150">
    <property type="entry name" value="Vaccinia Virus protein VP39"/>
    <property type="match status" value="1"/>
</dbReference>
<dbReference type="HAMAP" id="MF_01857">
    <property type="entry name" value="23SrRNA_methyltr_I"/>
    <property type="match status" value="1"/>
</dbReference>
<dbReference type="InterPro" id="IPR002478">
    <property type="entry name" value="PUA"/>
</dbReference>
<dbReference type="InterPro" id="IPR015947">
    <property type="entry name" value="PUA-like_sf"/>
</dbReference>
<dbReference type="InterPro" id="IPR036974">
    <property type="entry name" value="PUA_sf"/>
</dbReference>
<dbReference type="InterPro" id="IPR023542">
    <property type="entry name" value="RLMI"/>
</dbReference>
<dbReference type="InterPro" id="IPR041532">
    <property type="entry name" value="RlmI-like_PUA"/>
</dbReference>
<dbReference type="InterPro" id="IPR019614">
    <property type="entry name" value="SAM-dep_methyl-trfase"/>
</dbReference>
<dbReference type="InterPro" id="IPR029063">
    <property type="entry name" value="SAM-dependent_MTases_sf"/>
</dbReference>
<dbReference type="NCBIfam" id="NF011707">
    <property type="entry name" value="PRK15128.1"/>
    <property type="match status" value="1"/>
</dbReference>
<dbReference type="PANTHER" id="PTHR42873">
    <property type="entry name" value="RIBOSOMAL RNA LARGE SUBUNIT METHYLTRANSFERASE"/>
    <property type="match status" value="1"/>
</dbReference>
<dbReference type="PANTHER" id="PTHR42873:SF1">
    <property type="entry name" value="S-ADENOSYLMETHIONINE-DEPENDENT METHYLTRANSFERASE DOMAIN-CONTAINING PROTEIN"/>
    <property type="match status" value="1"/>
</dbReference>
<dbReference type="Pfam" id="PF10672">
    <property type="entry name" value="Methyltrans_SAM"/>
    <property type="match status" value="1"/>
</dbReference>
<dbReference type="Pfam" id="PF17785">
    <property type="entry name" value="PUA_3"/>
    <property type="match status" value="1"/>
</dbReference>
<dbReference type="SMART" id="SM00359">
    <property type="entry name" value="PUA"/>
    <property type="match status" value="1"/>
</dbReference>
<dbReference type="SUPFAM" id="SSF88697">
    <property type="entry name" value="PUA domain-like"/>
    <property type="match status" value="1"/>
</dbReference>
<dbReference type="SUPFAM" id="SSF53335">
    <property type="entry name" value="S-adenosyl-L-methionine-dependent methyltransferases"/>
    <property type="match status" value="1"/>
</dbReference>
<dbReference type="PROSITE" id="PS50890">
    <property type="entry name" value="PUA"/>
    <property type="match status" value="1"/>
</dbReference>
<accession>B5YT98</accession>
<gene>
    <name evidence="1" type="primary">rlmI</name>
    <name type="ordered locus">ECH74115_1132</name>
</gene>
<proteinExistence type="inferred from homology"/>
<organism>
    <name type="scientific">Escherichia coli O157:H7 (strain EC4115 / EHEC)</name>
    <dbReference type="NCBI Taxonomy" id="444450"/>
    <lineage>
        <taxon>Bacteria</taxon>
        <taxon>Pseudomonadati</taxon>
        <taxon>Pseudomonadota</taxon>
        <taxon>Gammaproteobacteria</taxon>
        <taxon>Enterobacterales</taxon>
        <taxon>Enterobacteriaceae</taxon>
        <taxon>Escherichia</taxon>
    </lineage>
</organism>
<sequence>MSVRLVLAKGREKSLLRRHPWVFSGAVARMEGKASLGETIDIVDHQGKWLARGAYSPASQIRARVWTFDPSESIDIAFFSRRLQQAQKWRDWLAQKDGLDSYRLIAGESDGLPGITIDRFGNFLVLQLLSAGAEYQRAALISALQTLYPECAIYDRSDVAVRKKEGMELTQGLVTGELPPALLPIEEHGMKLLVDIQHGHKTGYYLDQRDSRLATRRYVENKRVLNCFSYTGGFAVSALMGGCSQVVSVDTSQEALDIARQNVELNKLDLSKAEFVRDDVFKLLRTYRDRGEKFDVIVMDPPKFVENKSQLMGACRGYKDINMLAIQLLNEGGILLTFSCSGLMTSDLFQKIIADAAIDAGRDVQFIEQFRQAADHPVIATYPEGLYLKGFACRVM</sequence>